<protein>
    <recommendedName>
        <fullName>SEC14 domain and spectrin repeat-containing protein 1</fullName>
    </recommendedName>
</protein>
<proteinExistence type="evidence at transcript level"/>
<sequence>MDATVILPILKKKLAFLSGGKDRRSGLILTIPLCSDQTSMDELSVTLDYLLSIPSDKCKARGFTVIVDGRKSQWNVVKTVVLMLQNVVPAEVSLVCVVKPDEFWDKKVTHFCFWKEKDRLGFEVILVSGNKLTRYIEPNQLTEEFGGSLTYDHMDWLNKRLVFEKFTKESTSLLDELAVINNGSDKGSQNEKERSVDFNYLPSVDPETVLQTGHELLSELQQRRFNGSDGGVSWSPMDDELLAQPQVMKLLDSLREQYTRYQEVCRQRSKRTQLDEIQQKVMQVVNWLEGPGSEQLRTQWGIGDSIRASQALQQKHEEIESQHSEWFAVYVELNQQIAALLNAGDEEDLVELKTLQQRLSDVCYRQASQLEFRQNLLQTALDFHSVAQDLSQQLDGLLGMLCVDVAPTDGAAIQQTLKLLEEKLKSVDTGLQGLREKGQGLLDQITNQASWAYGKDVSTENKDNVDHIQGIMEDMQLRKQRCEDMVDVRRLKMLQMVQLFKCEEDAAQAVDWLNELLDALLKTHIRLGDDSQETKILLEKHRKFVDVAQSTYDYGRQLLQATVVLCQSLRCTSRSSGDTLPKLNRVWKQFTITSEERVHRLEMALAFHSNAEKILQECPDLGETVMDFEQFDEVEAVGKSVLDRLTVPVIYPDGTEQYFGTPSDMASTAEHIRERIKMVCLKKQQLLEPDESIRES</sequence>
<dbReference type="EMBL" id="BC088523">
    <property type="protein sequence ID" value="AAH88523.1"/>
    <property type="molecule type" value="mRNA"/>
</dbReference>
<dbReference type="RefSeq" id="NP_001011359.1">
    <property type="nucleotide sequence ID" value="NM_001011359.1"/>
</dbReference>
<dbReference type="SMR" id="Q5M7P4"/>
<dbReference type="FunCoup" id="Q5M7P4">
    <property type="interactions" value="317"/>
</dbReference>
<dbReference type="STRING" id="8364.ENSXETP00000048812"/>
<dbReference type="PaxDb" id="8364-ENSXETP00000032937"/>
<dbReference type="GeneID" id="496826"/>
<dbReference type="KEGG" id="xtr:496826"/>
<dbReference type="AGR" id="Xenbase:XB-GENE-977656"/>
<dbReference type="CTD" id="91404"/>
<dbReference type="Xenbase" id="XB-GENE-977656">
    <property type="gene designation" value="sestd1"/>
</dbReference>
<dbReference type="eggNOG" id="KOG4240">
    <property type="taxonomic scope" value="Eukaryota"/>
</dbReference>
<dbReference type="HOGENOM" id="CLU_010440_1_0_1"/>
<dbReference type="InParanoid" id="Q5M7P4"/>
<dbReference type="OMA" id="PDAFWDK"/>
<dbReference type="OrthoDB" id="5859883at2759"/>
<dbReference type="PhylomeDB" id="Q5M7P4"/>
<dbReference type="Proteomes" id="UP000008143">
    <property type="component" value="Chromosome 9"/>
</dbReference>
<dbReference type="Bgee" id="ENSXETG00000015051">
    <property type="expression patterns" value="Expressed in heart and 13 other cell types or tissues"/>
</dbReference>
<dbReference type="ExpressionAtlas" id="Q5M7P4">
    <property type="expression patterns" value="baseline and differential"/>
</dbReference>
<dbReference type="GO" id="GO:0048514">
    <property type="term" value="P:blood vessel morphogenesis"/>
    <property type="evidence" value="ECO:0007669"/>
    <property type="project" value="Ensembl"/>
</dbReference>
<dbReference type="FunFam" id="1.20.58.60:FF:000124">
    <property type="entry name" value="SEC14 domain and spectrin repeat-containing protein 1"/>
    <property type="match status" value="1"/>
</dbReference>
<dbReference type="FunFam" id="1.20.58.60:FF:000187">
    <property type="entry name" value="SEC14 domain and spectrin repeat-containing protein 1 isoform X2"/>
    <property type="match status" value="1"/>
</dbReference>
<dbReference type="Gene3D" id="1.20.58.60">
    <property type="match status" value="2"/>
</dbReference>
<dbReference type="InterPro" id="IPR001251">
    <property type="entry name" value="CRAL-TRIO_dom"/>
</dbReference>
<dbReference type="InterPro" id="IPR036865">
    <property type="entry name" value="CRAL-TRIO_dom_sf"/>
</dbReference>
<dbReference type="InterPro" id="IPR056804">
    <property type="entry name" value="Spectrin_SESTD1"/>
</dbReference>
<dbReference type="PANTHER" id="PTHR46607">
    <property type="entry name" value="SEC14 DOMAIN AND SPECTRIN REPEAT-CONTAINING PROTEIN 1"/>
    <property type="match status" value="1"/>
</dbReference>
<dbReference type="PANTHER" id="PTHR46607:SF1">
    <property type="entry name" value="SEC14 DOMAIN AND SPECTRIN REPEAT-CONTAINING PROTEIN 1"/>
    <property type="match status" value="1"/>
</dbReference>
<dbReference type="Pfam" id="PF13716">
    <property type="entry name" value="CRAL_TRIO_2"/>
    <property type="match status" value="1"/>
</dbReference>
<dbReference type="Pfam" id="PF24915">
    <property type="entry name" value="Spectrin_SESTD1"/>
    <property type="match status" value="1"/>
</dbReference>
<dbReference type="SUPFAM" id="SSF52087">
    <property type="entry name" value="CRAL/TRIO domain"/>
    <property type="match status" value="1"/>
</dbReference>
<dbReference type="SUPFAM" id="SSF46966">
    <property type="entry name" value="Spectrin repeat"/>
    <property type="match status" value="1"/>
</dbReference>
<dbReference type="PROSITE" id="PS50191">
    <property type="entry name" value="CRAL_TRIO"/>
    <property type="match status" value="1"/>
</dbReference>
<reference key="1">
    <citation type="submission" date="2004-12" db="EMBL/GenBank/DDBJ databases">
        <authorList>
            <consortium name="NIH - Xenopus Gene Collection (XGC) project"/>
        </authorList>
    </citation>
    <scope>NUCLEOTIDE SEQUENCE [LARGE SCALE MRNA]</scope>
    <source>
        <tissue>Embryo</tissue>
    </source>
</reference>
<accession>Q5M7P4</accession>
<name>SESD1_XENTR</name>
<comment type="function">
    <text evidence="1">May act as the primary docking protein directing membrane turnover and assembly of the transient receptor potential channels trpc4 and trpc5. Binds phospholipids (By similarity).</text>
</comment>
<comment type="similarity">
    <text evidence="3">Belongs to the SOLO family.</text>
</comment>
<feature type="chain" id="PRO_0000309481" description="SEC14 domain and spectrin repeat-containing protein 1">
    <location>
        <begin position="1"/>
        <end position="696"/>
    </location>
</feature>
<feature type="domain" description="CRAL-TRIO" evidence="2">
    <location>
        <begin position="1"/>
        <end position="153"/>
    </location>
</feature>
<feature type="repeat" description="Spectrin 1">
    <location>
        <begin position="272"/>
        <end position="378"/>
    </location>
</feature>
<feature type="repeat" description="Spectrin 2">
    <location>
        <begin position="381"/>
        <end position="494"/>
    </location>
</feature>
<feature type="repeat" description="Spectrin 3">
    <location>
        <begin position="500"/>
        <end position="602"/>
    </location>
</feature>
<organism>
    <name type="scientific">Xenopus tropicalis</name>
    <name type="common">Western clawed frog</name>
    <name type="synonym">Silurana tropicalis</name>
    <dbReference type="NCBI Taxonomy" id="8364"/>
    <lineage>
        <taxon>Eukaryota</taxon>
        <taxon>Metazoa</taxon>
        <taxon>Chordata</taxon>
        <taxon>Craniata</taxon>
        <taxon>Vertebrata</taxon>
        <taxon>Euteleostomi</taxon>
        <taxon>Amphibia</taxon>
        <taxon>Batrachia</taxon>
        <taxon>Anura</taxon>
        <taxon>Pipoidea</taxon>
        <taxon>Pipidae</taxon>
        <taxon>Xenopodinae</taxon>
        <taxon>Xenopus</taxon>
        <taxon>Silurana</taxon>
    </lineage>
</organism>
<keyword id="KW-1185">Reference proteome</keyword>
<keyword id="KW-0677">Repeat</keyword>
<evidence type="ECO:0000250" key="1"/>
<evidence type="ECO:0000255" key="2">
    <source>
        <dbReference type="PROSITE-ProRule" id="PRU00056"/>
    </source>
</evidence>
<evidence type="ECO:0000305" key="3"/>
<gene>
    <name type="primary">sestd1</name>
</gene>